<comment type="function">
    <text evidence="1">Component of the cytochrome b6-f complex, which mediates electron transfer between photosystem II (PSII) and photosystem I (PSI), cyclic electron flow around PSI, and state transitions.</text>
</comment>
<comment type="subunit">
    <text evidence="1">The 4 large subunits of the cytochrome b6-f complex are cytochrome b6, subunit IV (17 kDa polypeptide, PetD), cytochrome f and the Rieske protein, while the 4 small subunits are PetG, PetL, PetM and PetN. The complex functions as a dimer.</text>
</comment>
<comment type="subcellular location">
    <subcellularLocation>
        <location evidence="1">Cellular thylakoid membrane</location>
        <topology evidence="1">Multi-pass membrane protein</topology>
    </subcellularLocation>
</comment>
<comment type="similarity">
    <text evidence="1">Belongs to the cytochrome b family. PetD subfamily.</text>
</comment>
<proteinExistence type="inferred from homology"/>
<sequence length="160" mass="17432">MATQKKPDLSDPQLRAKLAKGMGHNYYGEPAWPNDLLYVFPIVIMGSFAAIVALAVLDPAMTGEPANPFATPLEILPEWYLYPVFQILRSLPNKLLGVLAMGSVPVGLILVPFIENVNKFQNPFRRPVATTVFLVGTLVTVWLGIGAALPLDKSLTLGLF</sequence>
<keyword id="KW-0249">Electron transport</keyword>
<keyword id="KW-0472">Membrane</keyword>
<keyword id="KW-0602">Photosynthesis</keyword>
<keyword id="KW-1185">Reference proteome</keyword>
<keyword id="KW-0793">Thylakoid</keyword>
<keyword id="KW-0812">Transmembrane</keyword>
<keyword id="KW-1133">Transmembrane helix</keyword>
<keyword id="KW-0813">Transport</keyword>
<feature type="chain" id="PRO_1000143204" description="Cytochrome b6-f complex subunit 4">
    <location>
        <begin position="1"/>
        <end position="160"/>
    </location>
</feature>
<feature type="transmembrane region" description="Helical" evidence="1">
    <location>
        <begin position="36"/>
        <end position="56"/>
    </location>
</feature>
<feature type="transmembrane region" description="Helical" evidence="1">
    <location>
        <begin position="95"/>
        <end position="115"/>
    </location>
</feature>
<feature type="transmembrane region" description="Helical" evidence="1">
    <location>
        <begin position="131"/>
        <end position="151"/>
    </location>
</feature>
<accession>B2J5T0</accession>
<evidence type="ECO:0000255" key="1">
    <source>
        <dbReference type="HAMAP-Rule" id="MF_01344"/>
    </source>
</evidence>
<protein>
    <recommendedName>
        <fullName evidence="1">Cytochrome b6-f complex subunit 4</fullName>
    </recommendedName>
    <alternativeName>
        <fullName evidence="1">17 kDa polypeptide</fullName>
    </alternativeName>
</protein>
<organism>
    <name type="scientific">Nostoc punctiforme (strain ATCC 29133 / PCC 73102)</name>
    <dbReference type="NCBI Taxonomy" id="63737"/>
    <lineage>
        <taxon>Bacteria</taxon>
        <taxon>Bacillati</taxon>
        <taxon>Cyanobacteriota</taxon>
        <taxon>Cyanophyceae</taxon>
        <taxon>Nostocales</taxon>
        <taxon>Nostocaceae</taxon>
        <taxon>Nostoc</taxon>
    </lineage>
</organism>
<gene>
    <name evidence="1" type="primary">petD</name>
    <name type="ordered locus">Npun_F0311</name>
</gene>
<dbReference type="EMBL" id="CP001037">
    <property type="protein sequence ID" value="ACC79096.1"/>
    <property type="molecule type" value="Genomic_DNA"/>
</dbReference>
<dbReference type="RefSeq" id="WP_012407122.1">
    <property type="nucleotide sequence ID" value="NC_010628.1"/>
</dbReference>
<dbReference type="SMR" id="B2J5T0"/>
<dbReference type="STRING" id="63737.Npun_F0311"/>
<dbReference type="EnsemblBacteria" id="ACC79096">
    <property type="protein sequence ID" value="ACC79096"/>
    <property type="gene ID" value="Npun_F0311"/>
</dbReference>
<dbReference type="KEGG" id="npu:Npun_F0311"/>
<dbReference type="eggNOG" id="COG1290">
    <property type="taxonomic scope" value="Bacteria"/>
</dbReference>
<dbReference type="HOGENOM" id="CLU_112652_0_0_3"/>
<dbReference type="OrthoDB" id="529454at2"/>
<dbReference type="PhylomeDB" id="B2J5T0"/>
<dbReference type="Proteomes" id="UP000001191">
    <property type="component" value="Chromosome"/>
</dbReference>
<dbReference type="GO" id="GO:0031676">
    <property type="term" value="C:plasma membrane-derived thylakoid membrane"/>
    <property type="evidence" value="ECO:0007669"/>
    <property type="project" value="UniProtKB-SubCell"/>
</dbReference>
<dbReference type="GO" id="GO:0045158">
    <property type="term" value="F:electron transporter, transferring electrons within cytochrome b6/f complex of photosystem II activity"/>
    <property type="evidence" value="ECO:0007669"/>
    <property type="project" value="UniProtKB-UniRule"/>
</dbReference>
<dbReference type="GO" id="GO:0045156">
    <property type="term" value="F:electron transporter, transferring electrons within the cyclic electron transport pathway of photosynthesis activity"/>
    <property type="evidence" value="ECO:0007669"/>
    <property type="project" value="InterPro"/>
</dbReference>
<dbReference type="GO" id="GO:0016491">
    <property type="term" value="F:oxidoreductase activity"/>
    <property type="evidence" value="ECO:0007669"/>
    <property type="project" value="InterPro"/>
</dbReference>
<dbReference type="GO" id="GO:0009767">
    <property type="term" value="P:photosynthetic electron transport chain"/>
    <property type="evidence" value="ECO:0007669"/>
    <property type="project" value="InterPro"/>
</dbReference>
<dbReference type="CDD" id="cd00290">
    <property type="entry name" value="cytochrome_b_C"/>
    <property type="match status" value="1"/>
</dbReference>
<dbReference type="FunFam" id="1.10.287.980:FF:000001">
    <property type="entry name" value="Cytochrome b6-f complex subunit 4"/>
    <property type="match status" value="1"/>
</dbReference>
<dbReference type="FunFam" id="1.20.5.510:FF:000002">
    <property type="entry name" value="Cytochrome b6-f complex subunit 4"/>
    <property type="match status" value="1"/>
</dbReference>
<dbReference type="Gene3D" id="1.10.287.980">
    <property type="entry name" value="plastocyanin oxidoreductase"/>
    <property type="match status" value="1"/>
</dbReference>
<dbReference type="Gene3D" id="1.20.5.510">
    <property type="entry name" value="Single helix bin"/>
    <property type="match status" value="1"/>
</dbReference>
<dbReference type="HAMAP" id="MF_01344">
    <property type="entry name" value="Cytb6_f_subIV"/>
    <property type="match status" value="1"/>
</dbReference>
<dbReference type="InterPro" id="IPR005798">
    <property type="entry name" value="Cyt_b/b6_C"/>
</dbReference>
<dbReference type="InterPro" id="IPR036150">
    <property type="entry name" value="Cyt_b/b6_C_sf"/>
</dbReference>
<dbReference type="InterPro" id="IPR005870">
    <property type="entry name" value="Cyt_b6/f_cplx_suIV"/>
</dbReference>
<dbReference type="InterPro" id="IPR048260">
    <property type="entry name" value="Cytochrome_b_C_euk/bac"/>
</dbReference>
<dbReference type="NCBIfam" id="TIGR01156">
    <property type="entry name" value="cytb6_f_IV"/>
    <property type="match status" value="1"/>
</dbReference>
<dbReference type="PANTHER" id="PTHR19271">
    <property type="entry name" value="CYTOCHROME B"/>
    <property type="match status" value="1"/>
</dbReference>
<dbReference type="PANTHER" id="PTHR19271:SF16">
    <property type="entry name" value="CYTOCHROME B"/>
    <property type="match status" value="1"/>
</dbReference>
<dbReference type="Pfam" id="PF00032">
    <property type="entry name" value="Cytochrom_B_C"/>
    <property type="match status" value="1"/>
</dbReference>
<dbReference type="PIRSF" id="PIRSF000033">
    <property type="entry name" value="B6f_17K"/>
    <property type="match status" value="1"/>
</dbReference>
<dbReference type="SUPFAM" id="SSF81648">
    <property type="entry name" value="a domain/subunit of cytochrome bc1 complex (Ubiquinol-cytochrome c reductase)"/>
    <property type="match status" value="1"/>
</dbReference>
<dbReference type="PROSITE" id="PS51003">
    <property type="entry name" value="CYTB_CTER"/>
    <property type="match status" value="1"/>
</dbReference>
<name>PETD_NOSP7</name>
<reference key="1">
    <citation type="journal article" date="2013" name="Plant Physiol.">
        <title>A Nostoc punctiforme Sugar Transporter Necessary to Establish a Cyanobacterium-Plant Symbiosis.</title>
        <authorList>
            <person name="Ekman M."/>
            <person name="Picossi S."/>
            <person name="Campbell E.L."/>
            <person name="Meeks J.C."/>
            <person name="Flores E."/>
        </authorList>
    </citation>
    <scope>NUCLEOTIDE SEQUENCE [LARGE SCALE GENOMIC DNA]</scope>
    <source>
        <strain>ATCC 29133 / PCC 73102</strain>
    </source>
</reference>